<feature type="chain" id="PRO_1000046123" description="Ribosomal protein L11 methyltransferase">
    <location>
        <begin position="1"/>
        <end position="306"/>
    </location>
</feature>
<feature type="binding site" evidence="1">
    <location>
        <position position="154"/>
    </location>
    <ligand>
        <name>S-adenosyl-L-methionine</name>
        <dbReference type="ChEBI" id="CHEBI:59789"/>
    </ligand>
</feature>
<feature type="binding site" evidence="1">
    <location>
        <position position="179"/>
    </location>
    <ligand>
        <name>S-adenosyl-L-methionine</name>
        <dbReference type="ChEBI" id="CHEBI:59789"/>
    </ligand>
</feature>
<feature type="binding site" evidence="1">
    <location>
        <position position="201"/>
    </location>
    <ligand>
        <name>S-adenosyl-L-methionine</name>
        <dbReference type="ChEBI" id="CHEBI:59789"/>
    </ligand>
</feature>
<feature type="binding site" evidence="1">
    <location>
        <position position="242"/>
    </location>
    <ligand>
        <name>S-adenosyl-L-methionine</name>
        <dbReference type="ChEBI" id="CHEBI:59789"/>
    </ligand>
</feature>
<reference key="1">
    <citation type="journal article" date="2005" name="Genome Res.">
        <title>Comparative and functional genomic analyses of the pathogenicity of phytopathogen Xanthomonas campestris pv. campestris.</title>
        <authorList>
            <person name="Qian W."/>
            <person name="Jia Y."/>
            <person name="Ren S.-X."/>
            <person name="He Y.-Q."/>
            <person name="Feng J.-X."/>
            <person name="Lu L.-F."/>
            <person name="Sun Q."/>
            <person name="Ying G."/>
            <person name="Tang D.-J."/>
            <person name="Tang H."/>
            <person name="Wu W."/>
            <person name="Hao P."/>
            <person name="Wang L."/>
            <person name="Jiang B.-L."/>
            <person name="Zeng S."/>
            <person name="Gu W.-Y."/>
            <person name="Lu G."/>
            <person name="Rong L."/>
            <person name="Tian Y."/>
            <person name="Yao Z."/>
            <person name="Fu G."/>
            <person name="Chen B."/>
            <person name="Fang R."/>
            <person name="Qiang B."/>
            <person name="Chen Z."/>
            <person name="Zhao G.-P."/>
            <person name="Tang J.-L."/>
            <person name="He C."/>
        </authorList>
    </citation>
    <scope>NUCLEOTIDE SEQUENCE [LARGE SCALE GENOMIC DNA]</scope>
    <source>
        <strain>8004</strain>
    </source>
</reference>
<organism>
    <name type="scientific">Xanthomonas campestris pv. campestris (strain 8004)</name>
    <dbReference type="NCBI Taxonomy" id="314565"/>
    <lineage>
        <taxon>Bacteria</taxon>
        <taxon>Pseudomonadati</taxon>
        <taxon>Pseudomonadota</taxon>
        <taxon>Gammaproteobacteria</taxon>
        <taxon>Lysobacterales</taxon>
        <taxon>Lysobacteraceae</taxon>
        <taxon>Xanthomonas</taxon>
    </lineage>
</organism>
<comment type="function">
    <text evidence="1">Methylates ribosomal protein L11.</text>
</comment>
<comment type="catalytic activity">
    <reaction evidence="1">
        <text>L-lysyl-[protein] + 3 S-adenosyl-L-methionine = N(6),N(6),N(6)-trimethyl-L-lysyl-[protein] + 3 S-adenosyl-L-homocysteine + 3 H(+)</text>
        <dbReference type="Rhea" id="RHEA:54192"/>
        <dbReference type="Rhea" id="RHEA-COMP:9752"/>
        <dbReference type="Rhea" id="RHEA-COMP:13826"/>
        <dbReference type="ChEBI" id="CHEBI:15378"/>
        <dbReference type="ChEBI" id="CHEBI:29969"/>
        <dbReference type="ChEBI" id="CHEBI:57856"/>
        <dbReference type="ChEBI" id="CHEBI:59789"/>
        <dbReference type="ChEBI" id="CHEBI:61961"/>
    </reaction>
</comment>
<comment type="subcellular location">
    <subcellularLocation>
        <location evidence="1">Cytoplasm</location>
    </subcellularLocation>
</comment>
<comment type="similarity">
    <text evidence="1">Belongs to the methyltransferase superfamily. PrmA family.</text>
</comment>
<keyword id="KW-0963">Cytoplasm</keyword>
<keyword id="KW-0489">Methyltransferase</keyword>
<keyword id="KW-0949">S-adenosyl-L-methionine</keyword>
<keyword id="KW-0808">Transferase</keyword>
<proteinExistence type="inferred from homology"/>
<name>PRMA_XANC8</name>
<evidence type="ECO:0000255" key="1">
    <source>
        <dbReference type="HAMAP-Rule" id="MF_00735"/>
    </source>
</evidence>
<dbReference type="EC" id="2.1.1.-" evidence="1"/>
<dbReference type="EMBL" id="CP000050">
    <property type="protein sequence ID" value="AAY47605.1"/>
    <property type="molecule type" value="Genomic_DNA"/>
</dbReference>
<dbReference type="RefSeq" id="WP_011035761.1">
    <property type="nucleotide sequence ID" value="NZ_CP155948.1"/>
</dbReference>
<dbReference type="SMR" id="Q4UZB8"/>
<dbReference type="KEGG" id="xcb:XC_0524"/>
<dbReference type="HOGENOM" id="CLU_049382_4_1_6"/>
<dbReference type="Proteomes" id="UP000000420">
    <property type="component" value="Chromosome"/>
</dbReference>
<dbReference type="GO" id="GO:0005829">
    <property type="term" value="C:cytosol"/>
    <property type="evidence" value="ECO:0007669"/>
    <property type="project" value="TreeGrafter"/>
</dbReference>
<dbReference type="GO" id="GO:0016279">
    <property type="term" value="F:protein-lysine N-methyltransferase activity"/>
    <property type="evidence" value="ECO:0007669"/>
    <property type="project" value="TreeGrafter"/>
</dbReference>
<dbReference type="GO" id="GO:0032259">
    <property type="term" value="P:methylation"/>
    <property type="evidence" value="ECO:0007669"/>
    <property type="project" value="UniProtKB-KW"/>
</dbReference>
<dbReference type="CDD" id="cd02440">
    <property type="entry name" value="AdoMet_MTases"/>
    <property type="match status" value="1"/>
</dbReference>
<dbReference type="Gene3D" id="3.40.50.150">
    <property type="entry name" value="Vaccinia Virus protein VP39"/>
    <property type="match status" value="1"/>
</dbReference>
<dbReference type="HAMAP" id="MF_00735">
    <property type="entry name" value="Methyltr_PrmA"/>
    <property type="match status" value="1"/>
</dbReference>
<dbReference type="InterPro" id="IPR050078">
    <property type="entry name" value="Ribosomal_L11_MeTrfase_PrmA"/>
</dbReference>
<dbReference type="InterPro" id="IPR004498">
    <property type="entry name" value="Ribosomal_PrmA_MeTrfase"/>
</dbReference>
<dbReference type="InterPro" id="IPR029063">
    <property type="entry name" value="SAM-dependent_MTases_sf"/>
</dbReference>
<dbReference type="NCBIfam" id="TIGR00406">
    <property type="entry name" value="prmA"/>
    <property type="match status" value="1"/>
</dbReference>
<dbReference type="PANTHER" id="PTHR43648">
    <property type="entry name" value="ELECTRON TRANSFER FLAVOPROTEIN BETA SUBUNIT LYSINE METHYLTRANSFERASE"/>
    <property type="match status" value="1"/>
</dbReference>
<dbReference type="PANTHER" id="PTHR43648:SF1">
    <property type="entry name" value="ELECTRON TRANSFER FLAVOPROTEIN BETA SUBUNIT LYSINE METHYLTRANSFERASE"/>
    <property type="match status" value="1"/>
</dbReference>
<dbReference type="Pfam" id="PF06325">
    <property type="entry name" value="PrmA"/>
    <property type="match status" value="1"/>
</dbReference>
<dbReference type="PIRSF" id="PIRSF000401">
    <property type="entry name" value="RPL11_MTase"/>
    <property type="match status" value="1"/>
</dbReference>
<dbReference type="SUPFAM" id="SSF53335">
    <property type="entry name" value="S-adenosyl-L-methionine-dependent methyltransferases"/>
    <property type="match status" value="1"/>
</dbReference>
<sequence>MPFLELTLPCTRATQPRFENALEDVGALAVTMLDAHAGTINERAILEPGVGEVRLWEETELTALFDGDSDPLMLLAALEAFDPSLDTRHATFRSVEDSAWERAWIDQFKPMRFGARTFIVPWNQDLPEEANTPDAAVVRLDPGLAFGSGTHQTTALCLRWLDALAGEGQLQGCSVLDFGCGSGILALAALKLGAANAVGVDYDPQALLATAENAERNAMEAQMQVYLPQDEPVQTYPVVLANILATALDALAETLAARVAPGGRIALSGIMQGQEQDLVQRYTPWFEHLHCEYDAEWVRIDGVRRH</sequence>
<accession>Q4UZB8</accession>
<protein>
    <recommendedName>
        <fullName evidence="1">Ribosomal protein L11 methyltransferase</fullName>
        <shortName evidence="1">L11 Mtase</shortName>
        <ecNumber evidence="1">2.1.1.-</ecNumber>
    </recommendedName>
</protein>
<gene>
    <name evidence="1" type="primary">prmA</name>
    <name type="ordered locus">XC_0524</name>
</gene>